<organism>
    <name type="scientific">Mycobacterium tuberculosis (strain ATCC 25618 / H37Rv)</name>
    <dbReference type="NCBI Taxonomy" id="83332"/>
    <lineage>
        <taxon>Bacteria</taxon>
        <taxon>Bacillati</taxon>
        <taxon>Actinomycetota</taxon>
        <taxon>Actinomycetes</taxon>
        <taxon>Mycobacteriales</taxon>
        <taxon>Mycobacteriaceae</taxon>
        <taxon>Mycobacterium</taxon>
        <taxon>Mycobacterium tuberculosis complex</taxon>
    </lineage>
</organism>
<feature type="chain" id="PRO_0000178722" description="Fructose-bisphosphate aldolase">
    <location>
        <begin position="1"/>
        <end position="344"/>
    </location>
</feature>
<feature type="active site" description="Proton donor" evidence="1">
    <location>
        <position position="95"/>
    </location>
</feature>
<feature type="binding site" evidence="1">
    <location>
        <position position="53"/>
    </location>
    <ligand>
        <name>D-glyceraldehyde 3-phosphate</name>
        <dbReference type="ChEBI" id="CHEBI:59776"/>
    </ligand>
</feature>
<feature type="binding site" evidence="1">
    <location>
        <position position="96"/>
    </location>
    <ligand>
        <name>Zn(2+)</name>
        <dbReference type="ChEBI" id="CHEBI:29105"/>
        <label>1</label>
        <note>catalytic</note>
    </ligand>
</feature>
<feature type="binding site" evidence="1">
    <location>
        <position position="131"/>
    </location>
    <ligand>
        <name>Zn(2+)</name>
        <dbReference type="ChEBI" id="CHEBI:29105"/>
        <label>2</label>
    </ligand>
</feature>
<feature type="binding site" evidence="1">
    <location>
        <position position="161"/>
    </location>
    <ligand>
        <name>Zn(2+)</name>
        <dbReference type="ChEBI" id="CHEBI:29105"/>
        <label>2</label>
    </ligand>
</feature>
<feature type="binding site" evidence="1">
    <location>
        <position position="212"/>
    </location>
    <ligand>
        <name>Zn(2+)</name>
        <dbReference type="ChEBI" id="CHEBI:29105"/>
        <label>1</label>
        <note>catalytic</note>
    </ligand>
</feature>
<feature type="binding site" evidence="1">
    <location>
        <position position="213"/>
    </location>
    <ligand>
        <name>dihydroxyacetone phosphate</name>
        <dbReference type="ChEBI" id="CHEBI:57642"/>
    </ligand>
</feature>
<feature type="binding site" evidence="1">
    <location>
        <position position="252"/>
    </location>
    <ligand>
        <name>Zn(2+)</name>
        <dbReference type="ChEBI" id="CHEBI:29105"/>
        <label>1</label>
        <note>catalytic</note>
    </ligand>
</feature>
<feature type="binding site" evidence="1">
    <location>
        <begin position="253"/>
        <end position="255"/>
    </location>
    <ligand>
        <name>dihydroxyacetone phosphate</name>
        <dbReference type="ChEBI" id="CHEBI:57642"/>
    </ligand>
</feature>
<feature type="binding site" evidence="1">
    <location>
        <begin position="274"/>
        <end position="277"/>
    </location>
    <ligand>
        <name>dihydroxyacetone phosphate</name>
        <dbReference type="ChEBI" id="CHEBI:57642"/>
    </ligand>
</feature>
<feature type="helix" evidence="3">
    <location>
        <begin position="6"/>
        <end position="18"/>
    </location>
</feature>
<feature type="strand" evidence="3">
    <location>
        <begin position="23"/>
        <end position="27"/>
    </location>
</feature>
<feature type="helix" evidence="3">
    <location>
        <begin position="31"/>
        <end position="43"/>
    </location>
</feature>
<feature type="strand" evidence="3">
    <location>
        <begin position="48"/>
        <end position="52"/>
    </location>
</feature>
<feature type="helix" evidence="3">
    <location>
        <begin position="54"/>
        <end position="61"/>
    </location>
</feature>
<feature type="turn" evidence="3">
    <location>
        <begin position="63"/>
        <end position="65"/>
    </location>
</feature>
<feature type="helix" evidence="3">
    <location>
        <begin position="68"/>
        <end position="83"/>
    </location>
</feature>
<feature type="strand" evidence="3">
    <location>
        <begin position="86"/>
        <end position="88"/>
    </location>
</feature>
<feature type="strand" evidence="3">
    <location>
        <begin position="90"/>
        <end position="94"/>
    </location>
</feature>
<feature type="helix" evidence="3">
    <location>
        <begin position="99"/>
        <end position="104"/>
    </location>
</feature>
<feature type="helix" evidence="3">
    <location>
        <begin position="106"/>
        <end position="118"/>
    </location>
</feature>
<feature type="strand" evidence="3">
    <location>
        <begin position="126"/>
        <end position="130"/>
    </location>
</feature>
<feature type="helix" evidence="3">
    <location>
        <begin position="137"/>
        <end position="153"/>
    </location>
</feature>
<feature type="strand" evidence="3">
    <location>
        <begin position="157"/>
        <end position="163"/>
    </location>
</feature>
<feature type="strand" evidence="4">
    <location>
        <begin position="166"/>
        <end position="169"/>
    </location>
</feature>
<feature type="strand" evidence="4">
    <location>
        <begin position="172"/>
        <end position="174"/>
    </location>
</feature>
<feature type="helix" evidence="4">
    <location>
        <begin position="178"/>
        <end position="180"/>
    </location>
</feature>
<feature type="helix" evidence="3">
    <location>
        <begin position="184"/>
        <end position="194"/>
    </location>
</feature>
<feature type="turn" evidence="4">
    <location>
        <begin position="195"/>
        <end position="199"/>
    </location>
</feature>
<feature type="strand" evidence="3">
    <location>
        <begin position="202"/>
        <end position="206"/>
    </location>
</feature>
<feature type="strand" evidence="3">
    <location>
        <begin position="211"/>
        <end position="213"/>
    </location>
</feature>
<feature type="helix" evidence="3">
    <location>
        <begin position="225"/>
        <end position="238"/>
    </location>
</feature>
<feature type="strand" evidence="3">
    <location>
        <begin position="249"/>
        <end position="251"/>
    </location>
</feature>
<feature type="helix" evidence="3">
    <location>
        <begin position="259"/>
        <end position="267"/>
    </location>
</feature>
<feature type="strand" evidence="3">
    <location>
        <begin position="270"/>
        <end position="275"/>
    </location>
</feature>
<feature type="helix" evidence="3">
    <location>
        <begin position="277"/>
        <end position="293"/>
    </location>
</feature>
<feature type="helix" evidence="3">
    <location>
        <begin position="295"/>
        <end position="298"/>
    </location>
</feature>
<feature type="helix" evidence="3">
    <location>
        <begin position="308"/>
        <end position="311"/>
    </location>
</feature>
<feature type="helix" evidence="3">
    <location>
        <begin position="313"/>
        <end position="334"/>
    </location>
</feature>
<name>ALF_MYCTU</name>
<evidence type="ECO:0000250" key="1"/>
<evidence type="ECO:0000305" key="2"/>
<evidence type="ECO:0007829" key="3">
    <source>
        <dbReference type="PDB" id="3ELF"/>
    </source>
</evidence>
<evidence type="ECO:0007829" key="4">
    <source>
        <dbReference type="PDB" id="4DEL"/>
    </source>
</evidence>
<protein>
    <recommendedName>
        <fullName>Fructose-bisphosphate aldolase</fullName>
        <shortName>FBP aldolase</shortName>
        <shortName>FBPA</shortName>
        <ecNumber>4.1.2.13</ecNumber>
    </recommendedName>
    <alternativeName>
        <fullName>Fructose-1,6-bisphosphate aldolase</fullName>
    </alternativeName>
</protein>
<dbReference type="EC" id="4.1.2.13"/>
<dbReference type="EMBL" id="AL123456">
    <property type="protein sequence ID" value="CCP43093.1"/>
    <property type="molecule type" value="Genomic_DNA"/>
</dbReference>
<dbReference type="PIR" id="D70576">
    <property type="entry name" value="D70576"/>
</dbReference>
<dbReference type="RefSeq" id="NP_214877.1">
    <property type="nucleotide sequence ID" value="NC_000962.3"/>
</dbReference>
<dbReference type="PDB" id="3EKL">
    <property type="method" value="X-ray"/>
    <property type="resolution" value="1.51 A"/>
    <property type="chains" value="A=1-344"/>
</dbReference>
<dbReference type="PDB" id="3EKZ">
    <property type="method" value="X-ray"/>
    <property type="resolution" value="2.07 A"/>
    <property type="chains" value="A=1-344"/>
</dbReference>
<dbReference type="PDB" id="3ELF">
    <property type="method" value="X-ray"/>
    <property type="resolution" value="1.31 A"/>
    <property type="chains" value="A=1-344"/>
</dbReference>
<dbReference type="PDB" id="4A21">
    <property type="method" value="X-ray"/>
    <property type="resolution" value="2.35 A"/>
    <property type="chains" value="A/B/C/D=1-344"/>
</dbReference>
<dbReference type="PDB" id="4A22">
    <property type="method" value="X-ray"/>
    <property type="resolution" value="1.90 A"/>
    <property type="chains" value="A/B/C/D=1-344"/>
</dbReference>
<dbReference type="PDB" id="4DEF">
    <property type="method" value="X-ray"/>
    <property type="resolution" value="1.64 A"/>
    <property type="chains" value="A=1-344"/>
</dbReference>
<dbReference type="PDB" id="4DEL">
    <property type="method" value="X-ray"/>
    <property type="resolution" value="1.58 A"/>
    <property type="chains" value="A=1-344"/>
</dbReference>
<dbReference type="PDB" id="4LV4">
    <property type="method" value="X-ray"/>
    <property type="resolution" value="2.08 A"/>
    <property type="chains" value="A=1-344"/>
</dbReference>
<dbReference type="PDBsum" id="3EKL"/>
<dbReference type="PDBsum" id="3EKZ"/>
<dbReference type="PDBsum" id="3ELF"/>
<dbReference type="PDBsum" id="4A21"/>
<dbReference type="PDBsum" id="4A22"/>
<dbReference type="PDBsum" id="4DEF"/>
<dbReference type="PDBsum" id="4DEL"/>
<dbReference type="PDBsum" id="4LV4"/>
<dbReference type="SMR" id="P9WQA3"/>
<dbReference type="FunCoup" id="P9WQA3">
    <property type="interactions" value="271"/>
</dbReference>
<dbReference type="STRING" id="83332.Rv0363c"/>
<dbReference type="BindingDB" id="P9WQA3"/>
<dbReference type="ChEMBL" id="CHEMBL1287620"/>
<dbReference type="PaxDb" id="83332-Rv0363c"/>
<dbReference type="DNASU" id="886474"/>
<dbReference type="GeneID" id="886474"/>
<dbReference type="KEGG" id="mtu:Rv0363c"/>
<dbReference type="KEGG" id="mtv:RVBD_0363c"/>
<dbReference type="TubercuList" id="Rv0363c"/>
<dbReference type="eggNOG" id="COG0191">
    <property type="taxonomic scope" value="Bacteria"/>
</dbReference>
<dbReference type="InParanoid" id="P9WQA3"/>
<dbReference type="OrthoDB" id="9803995at2"/>
<dbReference type="PhylomeDB" id="P9WQA3"/>
<dbReference type="BRENDA" id="4.1.2.13">
    <property type="organism ID" value="3445"/>
</dbReference>
<dbReference type="SABIO-RK" id="P9WQA3"/>
<dbReference type="UniPathway" id="UPA00109">
    <property type="reaction ID" value="UER00183"/>
</dbReference>
<dbReference type="EvolutionaryTrace" id="P9WQA3"/>
<dbReference type="PRO" id="PR:P9WQA3"/>
<dbReference type="Proteomes" id="UP000001584">
    <property type="component" value="Chromosome"/>
</dbReference>
<dbReference type="GO" id="GO:0005829">
    <property type="term" value="C:cytosol"/>
    <property type="evidence" value="ECO:0000318"/>
    <property type="project" value="GO_Central"/>
</dbReference>
<dbReference type="GO" id="GO:0005576">
    <property type="term" value="C:extracellular region"/>
    <property type="evidence" value="ECO:0000314"/>
    <property type="project" value="CAFA"/>
</dbReference>
<dbReference type="GO" id="GO:0009274">
    <property type="term" value="C:peptidoglycan-based cell wall"/>
    <property type="evidence" value="ECO:0007005"/>
    <property type="project" value="MTBBASE"/>
</dbReference>
<dbReference type="GO" id="GO:0005886">
    <property type="term" value="C:plasma membrane"/>
    <property type="evidence" value="ECO:0007005"/>
    <property type="project" value="MTBBASE"/>
</dbReference>
<dbReference type="GO" id="GO:0004332">
    <property type="term" value="F:fructose-bisphosphate aldolase activity"/>
    <property type="evidence" value="ECO:0000314"/>
    <property type="project" value="MTBBASE"/>
</dbReference>
<dbReference type="GO" id="GO:0008270">
    <property type="term" value="F:zinc ion binding"/>
    <property type="evidence" value="ECO:0000314"/>
    <property type="project" value="MTBBASE"/>
</dbReference>
<dbReference type="GO" id="GO:0035375">
    <property type="term" value="F:zymogen binding"/>
    <property type="evidence" value="ECO:0000353"/>
    <property type="project" value="CAFA"/>
</dbReference>
<dbReference type="GO" id="GO:0006096">
    <property type="term" value="P:glycolytic process"/>
    <property type="evidence" value="ECO:0000314"/>
    <property type="project" value="MTBBASE"/>
</dbReference>
<dbReference type="FunFam" id="3.20.20.70:FF:000112">
    <property type="entry name" value="Fructose-bisphosphate aldolase Fba"/>
    <property type="match status" value="1"/>
</dbReference>
<dbReference type="Gene3D" id="3.20.20.70">
    <property type="entry name" value="Aldolase class I"/>
    <property type="match status" value="1"/>
</dbReference>
<dbReference type="InterPro" id="IPR013785">
    <property type="entry name" value="Aldolase_TIM"/>
</dbReference>
<dbReference type="InterPro" id="IPR000771">
    <property type="entry name" value="FBA_II"/>
</dbReference>
<dbReference type="InterPro" id="IPR006411">
    <property type="entry name" value="Fruct_bisP_bact"/>
</dbReference>
<dbReference type="NCBIfam" id="TIGR00167">
    <property type="entry name" value="cbbA"/>
    <property type="match status" value="1"/>
</dbReference>
<dbReference type="NCBIfam" id="TIGR01520">
    <property type="entry name" value="FruBisAldo_II_A"/>
    <property type="match status" value="1"/>
</dbReference>
<dbReference type="NCBIfam" id="NF006628">
    <property type="entry name" value="PRK09197.1"/>
    <property type="match status" value="1"/>
</dbReference>
<dbReference type="PANTHER" id="PTHR30559:SF0">
    <property type="entry name" value="FRUCTOSE-BISPHOSPHATE ALDOLASE"/>
    <property type="match status" value="1"/>
</dbReference>
<dbReference type="PANTHER" id="PTHR30559">
    <property type="entry name" value="FRUCTOSE-BISPHOSPHATE ALDOLASE CLASS 2"/>
    <property type="match status" value="1"/>
</dbReference>
<dbReference type="Pfam" id="PF01116">
    <property type="entry name" value="F_bP_aldolase"/>
    <property type="match status" value="1"/>
</dbReference>
<dbReference type="PIRSF" id="PIRSF001359">
    <property type="entry name" value="F_bP_aldolase_II"/>
    <property type="match status" value="1"/>
</dbReference>
<dbReference type="SUPFAM" id="SSF51569">
    <property type="entry name" value="Aldolase"/>
    <property type="match status" value="1"/>
</dbReference>
<dbReference type="PROSITE" id="PS00602">
    <property type="entry name" value="ALDOLASE_CLASS_II_1"/>
    <property type="match status" value="1"/>
</dbReference>
<dbReference type="PROSITE" id="PS00806">
    <property type="entry name" value="ALDOLASE_CLASS_II_2"/>
    <property type="match status" value="1"/>
</dbReference>
<keyword id="KW-0002">3D-structure</keyword>
<keyword id="KW-0324">Glycolysis</keyword>
<keyword id="KW-0456">Lyase</keyword>
<keyword id="KW-0479">Metal-binding</keyword>
<keyword id="KW-1185">Reference proteome</keyword>
<keyword id="KW-0862">Zinc</keyword>
<proteinExistence type="evidence at protein level"/>
<comment type="function">
    <text evidence="1">Catalyzes the aldol condensation of dihydroxyacetone phosphate (DHAP or glycerone-phosphate) with glyceraldehyde 3-phosphate (G3P) to form fructose 1,6-bisphosphate (FBP) in gluconeogenesis and the reverse reaction in glycolysis.</text>
</comment>
<comment type="catalytic activity">
    <reaction>
        <text>beta-D-fructose 1,6-bisphosphate = D-glyceraldehyde 3-phosphate + dihydroxyacetone phosphate</text>
        <dbReference type="Rhea" id="RHEA:14729"/>
        <dbReference type="ChEBI" id="CHEBI:32966"/>
        <dbReference type="ChEBI" id="CHEBI:57642"/>
        <dbReference type="ChEBI" id="CHEBI:59776"/>
        <dbReference type="EC" id="4.1.2.13"/>
    </reaction>
</comment>
<comment type="cofactor">
    <cofactor evidence="1">
        <name>Zn(2+)</name>
        <dbReference type="ChEBI" id="CHEBI:29105"/>
    </cofactor>
    <text evidence="1">Binds 2 Zn(2+) ions per subunit. One is catalytic and the other provides a structural contribution.</text>
</comment>
<comment type="pathway">
    <text>Carbohydrate degradation; glycolysis; D-glyceraldehyde 3-phosphate and glycerone phosphate from D-glucose: step 4/4.</text>
</comment>
<comment type="miscellaneous">
    <text>Was identified as a high-confidence drug target.</text>
</comment>
<comment type="similarity">
    <text evidence="2">Belongs to the class II fructose-bisphosphate aldolase family.</text>
</comment>
<sequence>MPIATPEVYAEMLGQAKQNSYAFPAINCTSSETVNAAIKGFADAGSDGIIQFSTGGAEFGSGLGVKDMVTGAVALAEFTHVIAAKYPVNVALHTDHCPKDKLDSYVRPLLAISAQRVSKGGNPLFQSHMWDGSAVPIDENLAIAQELLKAAAAAKIILEIEIGVVGGEEDGVANEINEKLYTSPEDFEKTIEALGAGEHGKYLLAATFGNVHGVYKPGNVKLRPDILAQGQQVAAAKLGLPADAKPFDFVFHGGSGSLKSEIEEALRYGVVKMNVDTDTQYAFTRPIAGHMFTNYDGVLKVDGEVGVKKVYDPRSYLKKAEASMSQRVVQACNDLHCAGKSLTH</sequence>
<accession>P9WQA3</accession>
<accession>L0T684</accession>
<accession>O06313</accession>
<accession>P67475</accession>
<gene>
    <name type="primary">fba</name>
    <name type="ordered locus">Rv0363c</name>
    <name type="ORF">MTCY13E10.25c</name>
</gene>
<reference key="1">
    <citation type="journal article" date="1998" name="Nature">
        <title>Deciphering the biology of Mycobacterium tuberculosis from the complete genome sequence.</title>
        <authorList>
            <person name="Cole S.T."/>
            <person name="Brosch R."/>
            <person name="Parkhill J."/>
            <person name="Garnier T."/>
            <person name="Churcher C.M."/>
            <person name="Harris D.E."/>
            <person name="Gordon S.V."/>
            <person name="Eiglmeier K."/>
            <person name="Gas S."/>
            <person name="Barry C.E. III"/>
            <person name="Tekaia F."/>
            <person name="Badcock K."/>
            <person name="Basham D."/>
            <person name="Brown D."/>
            <person name="Chillingworth T."/>
            <person name="Connor R."/>
            <person name="Davies R.M."/>
            <person name="Devlin K."/>
            <person name="Feltwell T."/>
            <person name="Gentles S."/>
            <person name="Hamlin N."/>
            <person name="Holroyd S."/>
            <person name="Hornsby T."/>
            <person name="Jagels K."/>
            <person name="Krogh A."/>
            <person name="McLean J."/>
            <person name="Moule S."/>
            <person name="Murphy L.D."/>
            <person name="Oliver S."/>
            <person name="Osborne J."/>
            <person name="Quail M.A."/>
            <person name="Rajandream M.A."/>
            <person name="Rogers J."/>
            <person name="Rutter S."/>
            <person name="Seeger K."/>
            <person name="Skelton S."/>
            <person name="Squares S."/>
            <person name="Squares R."/>
            <person name="Sulston J.E."/>
            <person name="Taylor K."/>
            <person name="Whitehead S."/>
            <person name="Barrell B.G."/>
        </authorList>
    </citation>
    <scope>NUCLEOTIDE SEQUENCE [LARGE SCALE GENOMIC DNA]</scope>
    <source>
        <strain>ATCC 25618 / H37Rv</strain>
    </source>
</reference>
<reference key="2">
    <citation type="journal article" date="2008" name="BMC Syst. Biol.">
        <title>targetTB: a target identification pipeline for Mycobacterium tuberculosis through an interactome, reactome and genome-scale structural analysis.</title>
        <authorList>
            <person name="Raman K."/>
            <person name="Yeturu K."/>
            <person name="Chandra N."/>
        </authorList>
    </citation>
    <scope>IDENTIFICATION AS A DRUG TARGET [LARGE SCALE ANALYSIS]</scope>
</reference>
<reference key="3">
    <citation type="journal article" date="2011" name="Mol. Cell. Proteomics">
        <title>Proteogenomic analysis of Mycobacterium tuberculosis by high resolution mass spectrometry.</title>
        <authorList>
            <person name="Kelkar D.S."/>
            <person name="Kumar D."/>
            <person name="Kumar P."/>
            <person name="Balakrishnan L."/>
            <person name="Muthusamy B."/>
            <person name="Yadav A.K."/>
            <person name="Shrivastava P."/>
            <person name="Marimuthu A."/>
            <person name="Anand S."/>
            <person name="Sundaram H."/>
            <person name="Kingsbury R."/>
            <person name="Harsha H.C."/>
            <person name="Nair B."/>
            <person name="Prasad T.S."/>
            <person name="Chauhan D.S."/>
            <person name="Katoch K."/>
            <person name="Katoch V.M."/>
            <person name="Kumar P."/>
            <person name="Chaerkady R."/>
            <person name="Ramachandran S."/>
            <person name="Dash D."/>
            <person name="Pandey A."/>
        </authorList>
    </citation>
    <scope>IDENTIFICATION BY MASS SPECTROMETRY [LARGE SCALE ANALYSIS]</scope>
    <source>
        <strain>ATCC 25618 / H37Rv</strain>
    </source>
</reference>